<reference key="1">
    <citation type="journal article" date="2006" name="Lancet">
        <title>Complete genome sequence of USA300, an epidemic clone of community-acquired meticillin-resistant Staphylococcus aureus.</title>
        <authorList>
            <person name="Diep B.A."/>
            <person name="Gill S.R."/>
            <person name="Chang R.F."/>
            <person name="Phan T.H."/>
            <person name="Chen J.H."/>
            <person name="Davidson M.G."/>
            <person name="Lin F."/>
            <person name="Lin J."/>
            <person name="Carleton H.A."/>
            <person name="Mongodin E.F."/>
            <person name="Sensabaugh G.F."/>
            <person name="Perdreau-Remington F."/>
        </authorList>
    </citation>
    <scope>NUCLEOTIDE SEQUENCE [LARGE SCALE GENOMIC DNA]</scope>
    <source>
        <strain>USA300</strain>
    </source>
</reference>
<comment type="function">
    <text evidence="1">Accessory element involved in the expression of sarA and several virulence factors. Modulates SarA production and/or function in a strain-dependent manner. Affects the transcription of the accessory gene regulator (agr) and genes encoding virulence factors including alpha toxin (hla) and protein A (spa) (By similarity).</text>
</comment>
<comment type="subcellular location">
    <subcellularLocation>
        <location evidence="3">Cell membrane</location>
        <topology evidence="3">Multi-pass membrane protein</topology>
    </subcellularLocation>
</comment>
<accession>Q2FH37</accession>
<dbReference type="EMBL" id="CP000255">
    <property type="protein sequence ID" value="ABD20553.1"/>
    <property type="molecule type" value="Genomic_DNA"/>
</dbReference>
<dbReference type="RefSeq" id="WP_000876201.1">
    <property type="nucleotide sequence ID" value="NZ_CP027476.1"/>
</dbReference>
<dbReference type="SMR" id="Q2FH37"/>
<dbReference type="KEGG" id="saa:SAUSA300_1294"/>
<dbReference type="HOGENOM" id="CLU_157294_0_0_9"/>
<dbReference type="OMA" id="FNSYIKA"/>
<dbReference type="Proteomes" id="UP000001939">
    <property type="component" value="Chromosome"/>
</dbReference>
<dbReference type="GO" id="GO:0005886">
    <property type="term" value="C:plasma membrane"/>
    <property type="evidence" value="ECO:0007669"/>
    <property type="project" value="UniProtKB-SubCell"/>
</dbReference>
<dbReference type="NCBIfam" id="NF038270">
    <property type="entry name" value="membran_MsaC"/>
    <property type="match status" value="1"/>
</dbReference>
<gene>
    <name type="primary">msa</name>
    <name type="ordered locus">SAUSA300_1294</name>
</gene>
<evidence type="ECO:0000250" key="1"/>
<evidence type="ECO:0000255" key="2"/>
<evidence type="ECO:0000305" key="3"/>
<sequence>MKYLILSLVANLLVFGVLSAIGLNINILAAMMIVLVIPIMISGILFFKTNIDKTYIFFNIIFIDFYYYIYNVHLMTLPKFNNYIKAEMMELEDIDVLITSKDFGFDEILFYTLYLLLILIVLYYLKKQVKHKI</sequence>
<keyword id="KW-1003">Cell membrane</keyword>
<keyword id="KW-0472">Membrane</keyword>
<keyword id="KW-0812">Transmembrane</keyword>
<keyword id="KW-1133">Transmembrane helix</keyword>
<feature type="chain" id="PRO_0000253056" description="Protein msa">
    <location>
        <begin position="1"/>
        <end position="133"/>
    </location>
</feature>
<feature type="transmembrane region" description="Helical" evidence="2">
    <location>
        <begin position="3"/>
        <end position="23"/>
    </location>
</feature>
<feature type="transmembrane region" description="Helical" evidence="2">
    <location>
        <begin position="27"/>
        <end position="47"/>
    </location>
</feature>
<feature type="transmembrane region" description="Helical" evidence="2">
    <location>
        <begin position="55"/>
        <end position="75"/>
    </location>
</feature>
<feature type="transmembrane region" description="Helical" evidence="2">
    <location>
        <begin position="103"/>
        <end position="123"/>
    </location>
</feature>
<proteinExistence type="inferred from homology"/>
<protein>
    <recommendedName>
        <fullName>Protein msa</fullName>
    </recommendedName>
    <alternativeName>
        <fullName>Modulator of SarA</fullName>
    </alternativeName>
</protein>
<name>MSA_STAA3</name>
<organism>
    <name type="scientific">Staphylococcus aureus (strain USA300)</name>
    <dbReference type="NCBI Taxonomy" id="367830"/>
    <lineage>
        <taxon>Bacteria</taxon>
        <taxon>Bacillati</taxon>
        <taxon>Bacillota</taxon>
        <taxon>Bacilli</taxon>
        <taxon>Bacillales</taxon>
        <taxon>Staphylococcaceae</taxon>
        <taxon>Staphylococcus</taxon>
    </lineage>
</organism>